<accession>Q11JM1</accession>
<proteinExistence type="inferred from homology"/>
<evidence type="ECO:0000255" key="1">
    <source>
        <dbReference type="HAMAP-Rule" id="MF_00184"/>
    </source>
</evidence>
<evidence type="ECO:0000255" key="2">
    <source>
        <dbReference type="PROSITE-ProRule" id="PRU01228"/>
    </source>
</evidence>
<feature type="chain" id="PRO_1000020423" description="Threonine--tRNA ligase">
    <location>
        <begin position="1"/>
        <end position="656"/>
    </location>
</feature>
<feature type="domain" description="TGS" evidence="2">
    <location>
        <begin position="1"/>
        <end position="64"/>
    </location>
</feature>
<feature type="region of interest" description="Catalytic" evidence="1">
    <location>
        <begin position="246"/>
        <end position="548"/>
    </location>
</feature>
<feature type="binding site" evidence="1">
    <location>
        <position position="342"/>
    </location>
    <ligand>
        <name>Zn(2+)</name>
        <dbReference type="ChEBI" id="CHEBI:29105"/>
    </ligand>
</feature>
<feature type="binding site" evidence="1">
    <location>
        <position position="393"/>
    </location>
    <ligand>
        <name>Zn(2+)</name>
        <dbReference type="ChEBI" id="CHEBI:29105"/>
    </ligand>
</feature>
<feature type="binding site" evidence="1">
    <location>
        <position position="525"/>
    </location>
    <ligand>
        <name>Zn(2+)</name>
        <dbReference type="ChEBI" id="CHEBI:29105"/>
    </ligand>
</feature>
<gene>
    <name evidence="1" type="primary">thrS</name>
    <name type="ordered locus">Meso_1007</name>
</gene>
<keyword id="KW-0030">Aminoacyl-tRNA synthetase</keyword>
<keyword id="KW-0067">ATP-binding</keyword>
<keyword id="KW-0963">Cytoplasm</keyword>
<keyword id="KW-0436">Ligase</keyword>
<keyword id="KW-0479">Metal-binding</keyword>
<keyword id="KW-0547">Nucleotide-binding</keyword>
<keyword id="KW-0648">Protein biosynthesis</keyword>
<keyword id="KW-0694">RNA-binding</keyword>
<keyword id="KW-0820">tRNA-binding</keyword>
<keyword id="KW-0862">Zinc</keyword>
<protein>
    <recommendedName>
        <fullName evidence="1">Threonine--tRNA ligase</fullName>
        <ecNumber evidence="1">6.1.1.3</ecNumber>
    </recommendedName>
    <alternativeName>
        <fullName evidence="1">Threonyl-tRNA synthetase</fullName>
        <shortName evidence="1">ThrRS</shortName>
    </alternativeName>
</protein>
<name>SYT_CHESB</name>
<reference key="1">
    <citation type="submission" date="2006-06" db="EMBL/GenBank/DDBJ databases">
        <title>Complete sequence of chromosome of Mesorhizobium sp. BNC1.</title>
        <authorList>
            <consortium name="US DOE Joint Genome Institute"/>
            <person name="Copeland A."/>
            <person name="Lucas S."/>
            <person name="Lapidus A."/>
            <person name="Barry K."/>
            <person name="Detter J.C."/>
            <person name="Glavina del Rio T."/>
            <person name="Hammon N."/>
            <person name="Israni S."/>
            <person name="Dalin E."/>
            <person name="Tice H."/>
            <person name="Pitluck S."/>
            <person name="Chertkov O."/>
            <person name="Brettin T."/>
            <person name="Bruce D."/>
            <person name="Han C."/>
            <person name="Tapia R."/>
            <person name="Gilna P."/>
            <person name="Schmutz J."/>
            <person name="Larimer F."/>
            <person name="Land M."/>
            <person name="Hauser L."/>
            <person name="Kyrpides N."/>
            <person name="Mikhailova N."/>
            <person name="Richardson P."/>
        </authorList>
    </citation>
    <scope>NUCLEOTIDE SEQUENCE [LARGE SCALE GENOMIC DNA]</scope>
    <source>
        <strain>BNC1</strain>
    </source>
</reference>
<sequence>MAEAASLTFPDGSVRNVDAAMTGADIAESISKSLAKKAVAYAMDGSLRDLSDPVERSGKIEIITREDPRALELIRHDAAHVLAEAVQELWPGTQVTIGPVIENGFYYDFARNEPFTLDDLPVIEKKMREIVDRNKRFSKEVWPRDKAKKVFADKGESYKVELIDAIPEDQDLKIYFQGDWFDLCRGPHMASTGQIGKAFKLMKVAGAYWRGDSNRPMLTRIYGTAWADQQQLDSYLQMLEEAEKRDHRRLGREMDLFHFQEEGPGVVFWHAKGWRMFQNLVSYMRRRLDGVYQEVNAPQVLDHSLWQTSGHWGWYKENMFKVECADEEAEDKRTFALKPMNCPGHVQIFKHGLKSYRDLPIRLAEFGAVHRYEPSGALHGLMRVRGFTQDDAHIFCTEDQLAEECLKINDLILSTYADFGFEEIQVFFSTRPEKRVGSDALWDHAEEIMGGVLEQIAERSGGRIKTAINPGDGAFYGPKFDYVLKDAIGRQWQCGTTQVDFNLPERFGAFYIDKDSEKKQPVMIHRAICGSMERFLGILIENYAGHFPLWFAPLQVVVATITSDADDYARQVTQQLKAAGLTAEADLRNEKINYKVREHSLAKVPVILVCGKREAEEGSVNIRRLGSRDQASLLLAEAIAQLIDEATPPDIRRAKA</sequence>
<dbReference type="EC" id="6.1.1.3" evidence="1"/>
<dbReference type="EMBL" id="CP000390">
    <property type="protein sequence ID" value="ABG62404.1"/>
    <property type="molecule type" value="Genomic_DNA"/>
</dbReference>
<dbReference type="SMR" id="Q11JM1"/>
<dbReference type="STRING" id="266779.Meso_1007"/>
<dbReference type="KEGG" id="mes:Meso_1007"/>
<dbReference type="eggNOG" id="COG0441">
    <property type="taxonomic scope" value="Bacteria"/>
</dbReference>
<dbReference type="HOGENOM" id="CLU_008554_0_1_5"/>
<dbReference type="OrthoDB" id="9802304at2"/>
<dbReference type="GO" id="GO:0005829">
    <property type="term" value="C:cytosol"/>
    <property type="evidence" value="ECO:0007669"/>
    <property type="project" value="TreeGrafter"/>
</dbReference>
<dbReference type="GO" id="GO:0005524">
    <property type="term" value="F:ATP binding"/>
    <property type="evidence" value="ECO:0007669"/>
    <property type="project" value="UniProtKB-UniRule"/>
</dbReference>
<dbReference type="GO" id="GO:0046872">
    <property type="term" value="F:metal ion binding"/>
    <property type="evidence" value="ECO:0007669"/>
    <property type="project" value="UniProtKB-KW"/>
</dbReference>
<dbReference type="GO" id="GO:0004829">
    <property type="term" value="F:threonine-tRNA ligase activity"/>
    <property type="evidence" value="ECO:0007669"/>
    <property type="project" value="UniProtKB-UniRule"/>
</dbReference>
<dbReference type="GO" id="GO:0000049">
    <property type="term" value="F:tRNA binding"/>
    <property type="evidence" value="ECO:0007669"/>
    <property type="project" value="UniProtKB-KW"/>
</dbReference>
<dbReference type="GO" id="GO:0006435">
    <property type="term" value="P:threonyl-tRNA aminoacylation"/>
    <property type="evidence" value="ECO:0007669"/>
    <property type="project" value="UniProtKB-UniRule"/>
</dbReference>
<dbReference type="CDD" id="cd01667">
    <property type="entry name" value="TGS_ThrRS"/>
    <property type="match status" value="1"/>
</dbReference>
<dbReference type="CDD" id="cd00860">
    <property type="entry name" value="ThrRS_anticodon"/>
    <property type="match status" value="1"/>
</dbReference>
<dbReference type="CDD" id="cd00771">
    <property type="entry name" value="ThrRS_core"/>
    <property type="match status" value="1"/>
</dbReference>
<dbReference type="FunFam" id="3.30.54.20:FF:000002">
    <property type="entry name" value="Threonine--tRNA ligase"/>
    <property type="match status" value="1"/>
</dbReference>
<dbReference type="FunFam" id="3.30.930.10:FF:000002">
    <property type="entry name" value="Threonine--tRNA ligase"/>
    <property type="match status" value="1"/>
</dbReference>
<dbReference type="FunFam" id="3.40.50.800:FF:000001">
    <property type="entry name" value="Threonine--tRNA ligase"/>
    <property type="match status" value="1"/>
</dbReference>
<dbReference type="FunFam" id="3.30.980.10:FF:000005">
    <property type="entry name" value="Threonyl-tRNA synthetase, mitochondrial"/>
    <property type="match status" value="1"/>
</dbReference>
<dbReference type="Gene3D" id="3.10.20.30">
    <property type="match status" value="1"/>
</dbReference>
<dbReference type="Gene3D" id="3.30.54.20">
    <property type="match status" value="1"/>
</dbReference>
<dbReference type="Gene3D" id="3.40.50.800">
    <property type="entry name" value="Anticodon-binding domain"/>
    <property type="match status" value="1"/>
</dbReference>
<dbReference type="Gene3D" id="3.30.930.10">
    <property type="entry name" value="Bira Bifunctional Protein, Domain 2"/>
    <property type="match status" value="1"/>
</dbReference>
<dbReference type="Gene3D" id="3.30.980.10">
    <property type="entry name" value="Threonyl-trna Synthetase, Chain A, domain 2"/>
    <property type="match status" value="1"/>
</dbReference>
<dbReference type="HAMAP" id="MF_00184">
    <property type="entry name" value="Thr_tRNA_synth"/>
    <property type="match status" value="1"/>
</dbReference>
<dbReference type="InterPro" id="IPR002314">
    <property type="entry name" value="aa-tRNA-synt_IIb"/>
</dbReference>
<dbReference type="InterPro" id="IPR006195">
    <property type="entry name" value="aa-tRNA-synth_II"/>
</dbReference>
<dbReference type="InterPro" id="IPR045864">
    <property type="entry name" value="aa-tRNA-synth_II/BPL/LPL"/>
</dbReference>
<dbReference type="InterPro" id="IPR004154">
    <property type="entry name" value="Anticodon-bd"/>
</dbReference>
<dbReference type="InterPro" id="IPR036621">
    <property type="entry name" value="Anticodon-bd_dom_sf"/>
</dbReference>
<dbReference type="InterPro" id="IPR012675">
    <property type="entry name" value="Beta-grasp_dom_sf"/>
</dbReference>
<dbReference type="InterPro" id="IPR004095">
    <property type="entry name" value="TGS"/>
</dbReference>
<dbReference type="InterPro" id="IPR012676">
    <property type="entry name" value="TGS-like"/>
</dbReference>
<dbReference type="InterPro" id="IPR002320">
    <property type="entry name" value="Thr-tRNA-ligase_IIa"/>
</dbReference>
<dbReference type="InterPro" id="IPR018163">
    <property type="entry name" value="Thr/Ala-tRNA-synth_IIc_edit"/>
</dbReference>
<dbReference type="InterPro" id="IPR047246">
    <property type="entry name" value="ThrRS_anticodon"/>
</dbReference>
<dbReference type="InterPro" id="IPR033728">
    <property type="entry name" value="ThrRS_core"/>
</dbReference>
<dbReference type="InterPro" id="IPR012947">
    <property type="entry name" value="tRNA_SAD"/>
</dbReference>
<dbReference type="NCBIfam" id="TIGR00418">
    <property type="entry name" value="thrS"/>
    <property type="match status" value="1"/>
</dbReference>
<dbReference type="PANTHER" id="PTHR11451:SF44">
    <property type="entry name" value="THREONINE--TRNA LIGASE, CHLOROPLASTIC_MITOCHONDRIAL 2"/>
    <property type="match status" value="1"/>
</dbReference>
<dbReference type="PANTHER" id="PTHR11451">
    <property type="entry name" value="THREONINE-TRNA LIGASE"/>
    <property type="match status" value="1"/>
</dbReference>
<dbReference type="Pfam" id="PF03129">
    <property type="entry name" value="HGTP_anticodon"/>
    <property type="match status" value="1"/>
</dbReference>
<dbReference type="Pfam" id="PF02824">
    <property type="entry name" value="TGS"/>
    <property type="match status" value="1"/>
</dbReference>
<dbReference type="Pfam" id="PF00587">
    <property type="entry name" value="tRNA-synt_2b"/>
    <property type="match status" value="1"/>
</dbReference>
<dbReference type="Pfam" id="PF07973">
    <property type="entry name" value="tRNA_SAD"/>
    <property type="match status" value="1"/>
</dbReference>
<dbReference type="PRINTS" id="PR01047">
    <property type="entry name" value="TRNASYNTHTHR"/>
</dbReference>
<dbReference type="SMART" id="SM00863">
    <property type="entry name" value="tRNA_SAD"/>
    <property type="match status" value="1"/>
</dbReference>
<dbReference type="SUPFAM" id="SSF52954">
    <property type="entry name" value="Class II aaRS ABD-related"/>
    <property type="match status" value="1"/>
</dbReference>
<dbReference type="SUPFAM" id="SSF55681">
    <property type="entry name" value="Class II aaRS and biotin synthetases"/>
    <property type="match status" value="1"/>
</dbReference>
<dbReference type="SUPFAM" id="SSF81271">
    <property type="entry name" value="TGS-like"/>
    <property type="match status" value="1"/>
</dbReference>
<dbReference type="SUPFAM" id="SSF55186">
    <property type="entry name" value="ThrRS/AlaRS common domain"/>
    <property type="match status" value="1"/>
</dbReference>
<dbReference type="PROSITE" id="PS50862">
    <property type="entry name" value="AA_TRNA_LIGASE_II"/>
    <property type="match status" value="1"/>
</dbReference>
<dbReference type="PROSITE" id="PS51880">
    <property type="entry name" value="TGS"/>
    <property type="match status" value="1"/>
</dbReference>
<organism>
    <name type="scientific">Chelativorans sp. (strain BNC1)</name>
    <dbReference type="NCBI Taxonomy" id="266779"/>
    <lineage>
        <taxon>Bacteria</taxon>
        <taxon>Pseudomonadati</taxon>
        <taxon>Pseudomonadota</taxon>
        <taxon>Alphaproteobacteria</taxon>
        <taxon>Hyphomicrobiales</taxon>
        <taxon>Phyllobacteriaceae</taxon>
        <taxon>Chelativorans</taxon>
    </lineage>
</organism>
<comment type="function">
    <text evidence="1">Catalyzes the attachment of threonine to tRNA(Thr) in a two-step reaction: L-threonine is first activated by ATP to form Thr-AMP and then transferred to the acceptor end of tRNA(Thr). Also edits incorrectly charged L-seryl-tRNA(Thr).</text>
</comment>
<comment type="catalytic activity">
    <reaction evidence="1">
        <text>tRNA(Thr) + L-threonine + ATP = L-threonyl-tRNA(Thr) + AMP + diphosphate + H(+)</text>
        <dbReference type="Rhea" id="RHEA:24624"/>
        <dbReference type="Rhea" id="RHEA-COMP:9670"/>
        <dbReference type="Rhea" id="RHEA-COMP:9704"/>
        <dbReference type="ChEBI" id="CHEBI:15378"/>
        <dbReference type="ChEBI" id="CHEBI:30616"/>
        <dbReference type="ChEBI" id="CHEBI:33019"/>
        <dbReference type="ChEBI" id="CHEBI:57926"/>
        <dbReference type="ChEBI" id="CHEBI:78442"/>
        <dbReference type="ChEBI" id="CHEBI:78534"/>
        <dbReference type="ChEBI" id="CHEBI:456215"/>
        <dbReference type="EC" id="6.1.1.3"/>
    </reaction>
</comment>
<comment type="cofactor">
    <cofactor evidence="1">
        <name>Zn(2+)</name>
        <dbReference type="ChEBI" id="CHEBI:29105"/>
    </cofactor>
    <text evidence="1">Binds 1 zinc ion per subunit.</text>
</comment>
<comment type="subunit">
    <text evidence="1">Homodimer.</text>
</comment>
<comment type="subcellular location">
    <subcellularLocation>
        <location evidence="1">Cytoplasm</location>
    </subcellularLocation>
</comment>
<comment type="similarity">
    <text evidence="1">Belongs to the class-II aminoacyl-tRNA synthetase family.</text>
</comment>